<keyword id="KW-1003">Cell membrane</keyword>
<keyword id="KW-0217">Developmental protein</keyword>
<keyword id="KW-1015">Disulfide bond</keyword>
<keyword id="KW-0297">G-protein coupled receptor</keyword>
<keyword id="KW-0325">Glycoprotein</keyword>
<keyword id="KW-0472">Membrane</keyword>
<keyword id="KW-0675">Receptor</keyword>
<keyword id="KW-1185">Reference proteome</keyword>
<keyword id="KW-0732">Signal</keyword>
<keyword id="KW-0807">Transducer</keyword>
<keyword id="KW-0812">Transmembrane</keyword>
<keyword id="KW-1133">Transmembrane helix</keyword>
<keyword id="KW-0879">Wnt signaling pathway</keyword>
<comment type="function">
    <text evidence="4 5">Receptor for Wnt proteins. Functions in the canonical Wnt/beta-catenin signaling pathway (PubMed:10969734). The canonical Wnt/beta-catenin signaling pathway leads to the activation of disheveled proteins, inhibition of GSK-3 kinase, nuclear accumulation of beta-catenin and activation of Wnt target genes (PubMed:10969734). A second signaling pathway involving PKC and calcium fluxes has been seen for some family members, but it is not yet clear if it represents a distinct pathway or if it can be integrated in the canonical pathway, as PKC seems to be required for Wnt-mediated inactivation of GSK-3 kinase. Both pathways seem to involve interactions with G-proteins. May be involved in transduction and intercellular transmission of polarity information during tissue morphogenesis and/or in differentiated tissues (Probable).</text>
</comment>
<comment type="subunit">
    <text evidence="6">Interacts with wnt8.</text>
</comment>
<comment type="subcellular location">
    <subcellularLocation>
        <location evidence="4">Cell membrane</location>
        <topology evidence="2">Multi-pass membrane protein</topology>
    </subcellularLocation>
</comment>
<comment type="tissue specificity">
    <text evidence="4">In the embryo, expressed in the heart, pronephros and otic vesicles.</text>
</comment>
<comment type="developmental stage">
    <text evidence="4">Abundant in unfertilized eggs. Not detected in late gastrula or early neurula stages. Expressed in mid-neurula stages and maintained through tadpole stages.</text>
</comment>
<comment type="domain">
    <text evidence="1">Lys-Thr-X-X-X-Trp motif interacts with the PDZ domain of Dvl (Disheveled) family members and is involved in the activation of the Wnt/beta-catenin signaling pathway.</text>
</comment>
<comment type="domain">
    <text evidence="1">The FZ domain is involved in binding with Wnt ligands.</text>
</comment>
<comment type="similarity">
    <text evidence="5">Belongs to the G-protein coupled receptor Fz/Smo family.</text>
</comment>
<gene>
    <name type="primary">fzd1</name>
    <name type="synonym">fz1</name>
</gene>
<sequence length="559" mass="62870">MKHSHLLQRCSAQLCTRGSSLILSLLLSVCLSVEGQYNGEKGISIPDHGYCQPISIPLCTDIAYNQTIMPNLLGHTNQEDAGLEVHQFYPLVKVQCSPELKFFLCSIYAPVCTVLEQALPPCRSLCDRARQGCEALMNKFGFQWPESLRCEKFPINGAGELCVGQNTTESGTPTPAVPETWTSNSRTYYRDKFMCPRALKVPAYVNYHFLGEKDCGAPCEVGKVHGLMYFAPEELNFARIWIGIWSVLCCASTLFTVLTYLVDMKRFSYPERPIIFLSGCYTMVAIAYIAGFLLEDKVVCNERFAEDGYKTVAQGTKKEGCTFLFMMLYFFSMASSIWWVILSLTWFLAAGMKWGHEAIEANSQYFHLAAWAVPAIKTITILAVGQVDGDTLSGVCFVGINNVDALRGFVLAPLFVYLFIGTSFLLAGFVSLFRIRTIMKHDGTKTEKLEKLMVRIGIFSVLYTVPATIVIACYFYEQAFREQWEKSWISQSCKTYAIPCPSTGHPPMSPDFTVFMIKYLMTLIVGITSGFWIWSGKTLNSWRKFYTRLTNSKQGETTV</sequence>
<proteinExistence type="evidence at protein level"/>
<feature type="signal peptide" evidence="2">
    <location>
        <begin position="1"/>
        <end position="35"/>
    </location>
</feature>
<feature type="chain" id="PRO_0000012977" description="Frizzled-1">
    <location>
        <begin position="36"/>
        <end position="559"/>
    </location>
</feature>
<feature type="topological domain" description="Extracellular" evidence="2">
    <location>
        <begin position="36"/>
        <end position="239"/>
    </location>
</feature>
<feature type="transmembrane region" description="Helical; Name=1" evidence="2">
    <location>
        <begin position="240"/>
        <end position="260"/>
    </location>
</feature>
<feature type="topological domain" description="Cytoplasmic" evidence="2">
    <location>
        <begin position="261"/>
        <end position="273"/>
    </location>
</feature>
<feature type="transmembrane region" description="Helical; Name=2" evidence="2">
    <location>
        <begin position="274"/>
        <end position="294"/>
    </location>
</feature>
<feature type="topological domain" description="Extracellular" evidence="2">
    <location>
        <begin position="295"/>
        <end position="321"/>
    </location>
</feature>
<feature type="transmembrane region" description="Helical; Name=3" evidence="2">
    <location>
        <begin position="322"/>
        <end position="342"/>
    </location>
</feature>
<feature type="topological domain" description="Cytoplasmic" evidence="2">
    <location>
        <begin position="343"/>
        <end position="364"/>
    </location>
</feature>
<feature type="transmembrane region" description="Helical; Name=4" evidence="2">
    <location>
        <begin position="365"/>
        <end position="385"/>
    </location>
</feature>
<feature type="topological domain" description="Extracellular" evidence="2">
    <location>
        <begin position="386"/>
        <end position="408"/>
    </location>
</feature>
<feature type="transmembrane region" description="Helical; Name=5" evidence="2">
    <location>
        <begin position="409"/>
        <end position="429"/>
    </location>
</feature>
<feature type="topological domain" description="Cytoplasmic" evidence="2">
    <location>
        <begin position="430"/>
        <end position="455"/>
    </location>
</feature>
<feature type="transmembrane region" description="Helical; Name=6" evidence="2">
    <location>
        <begin position="456"/>
        <end position="476"/>
    </location>
</feature>
<feature type="topological domain" description="Extracellular" evidence="2">
    <location>
        <begin position="477"/>
        <end position="513"/>
    </location>
</feature>
<feature type="transmembrane region" description="Helical; Name=7" evidence="2">
    <location>
        <begin position="514"/>
        <end position="534"/>
    </location>
</feature>
<feature type="topological domain" description="Cytoplasmic" evidence="2">
    <location>
        <begin position="535"/>
        <end position="559"/>
    </location>
</feature>
<feature type="domain" description="FZ" evidence="3">
    <location>
        <begin position="46"/>
        <end position="165"/>
    </location>
</feature>
<feature type="short sequence motif" description="Lys-Thr-X-X-X-Trp motif, mediates interaction with the PDZ domain of Dvl family members" evidence="1">
    <location>
        <begin position="537"/>
        <end position="542"/>
    </location>
</feature>
<feature type="short sequence motif" description="PDZ-binding">
    <location>
        <begin position="557"/>
        <end position="559"/>
    </location>
</feature>
<feature type="glycosylation site" description="N-linked (GlcNAc...) asparagine" evidence="2">
    <location>
        <position position="65"/>
    </location>
</feature>
<feature type="glycosylation site" description="N-linked (GlcNAc...) asparagine" evidence="2">
    <location>
        <position position="166"/>
    </location>
</feature>
<feature type="disulfide bond" evidence="3">
    <location>
        <begin position="51"/>
        <end position="112"/>
    </location>
</feature>
<feature type="disulfide bond" evidence="3">
    <location>
        <begin position="59"/>
        <end position="105"/>
    </location>
</feature>
<feature type="disulfide bond" evidence="3">
    <location>
        <begin position="96"/>
        <end position="133"/>
    </location>
</feature>
<feature type="disulfide bond" evidence="3">
    <location>
        <begin position="122"/>
        <end position="162"/>
    </location>
</feature>
<feature type="disulfide bond" evidence="3">
    <location>
        <begin position="126"/>
        <end position="150"/>
    </location>
</feature>
<protein>
    <recommendedName>
        <fullName>Frizzled-1</fullName>
        <shortName>Fz-1</shortName>
        <shortName>Xfz1</shortName>
    </recommendedName>
</protein>
<name>FZD1_XENLA</name>
<accession>Q9I9M5</accession>
<evidence type="ECO:0000250" key="1"/>
<evidence type="ECO:0000255" key="2"/>
<evidence type="ECO:0000255" key="3">
    <source>
        <dbReference type="PROSITE-ProRule" id="PRU00090"/>
    </source>
</evidence>
<evidence type="ECO:0000269" key="4">
    <source>
    </source>
</evidence>
<evidence type="ECO:0000305" key="5"/>
<evidence type="ECO:0000305" key="6">
    <source>
    </source>
</evidence>
<dbReference type="EMBL" id="AF231711">
    <property type="protein sequence ID" value="AAF36979.1"/>
    <property type="molecule type" value="mRNA"/>
</dbReference>
<dbReference type="RefSeq" id="NP_001079207.1">
    <property type="nucleotide sequence ID" value="NM_001085738.1"/>
</dbReference>
<dbReference type="SMR" id="Q9I9M5"/>
<dbReference type="GlyCosmos" id="Q9I9M5">
    <property type="glycosylation" value="2 sites, No reported glycans"/>
</dbReference>
<dbReference type="GeneID" id="373817"/>
<dbReference type="KEGG" id="xla:373817"/>
<dbReference type="AGR" id="Xenbase:XB-GENE-865493"/>
<dbReference type="CTD" id="373817"/>
<dbReference type="Xenbase" id="XB-GENE-865493">
    <property type="gene designation" value="fzd1.L"/>
</dbReference>
<dbReference type="OMA" id="VPDHGYC"/>
<dbReference type="OrthoDB" id="10053709at2759"/>
<dbReference type="Proteomes" id="UP000186698">
    <property type="component" value="Chromosome 6L"/>
</dbReference>
<dbReference type="Bgee" id="373817">
    <property type="expression patterns" value="Expressed in internal ear and 19 other cell types or tissues"/>
</dbReference>
<dbReference type="GO" id="GO:0005886">
    <property type="term" value="C:plasma membrane"/>
    <property type="evidence" value="ECO:0000318"/>
    <property type="project" value="GO_Central"/>
</dbReference>
<dbReference type="GO" id="GO:0004930">
    <property type="term" value="F:G protein-coupled receptor activity"/>
    <property type="evidence" value="ECO:0007669"/>
    <property type="project" value="UniProtKB-KW"/>
</dbReference>
<dbReference type="GO" id="GO:0042813">
    <property type="term" value="F:Wnt receptor activity"/>
    <property type="evidence" value="ECO:0000318"/>
    <property type="project" value="GO_Central"/>
</dbReference>
<dbReference type="GO" id="GO:0017147">
    <property type="term" value="F:Wnt-protein binding"/>
    <property type="evidence" value="ECO:0000318"/>
    <property type="project" value="GO_Central"/>
</dbReference>
<dbReference type="GO" id="GO:0060070">
    <property type="term" value="P:canonical Wnt signaling pathway"/>
    <property type="evidence" value="ECO:0000318"/>
    <property type="project" value="GO_Central"/>
</dbReference>
<dbReference type="GO" id="GO:0035567">
    <property type="term" value="P:non-canonical Wnt signaling pathway"/>
    <property type="evidence" value="ECO:0000318"/>
    <property type="project" value="GO_Central"/>
</dbReference>
<dbReference type="CDD" id="cd15247">
    <property type="entry name" value="7tmF_FZD1"/>
    <property type="match status" value="1"/>
</dbReference>
<dbReference type="CDD" id="cd07465">
    <property type="entry name" value="CRD_FZ1"/>
    <property type="match status" value="1"/>
</dbReference>
<dbReference type="FunFam" id="1.10.2000.10:FF:000003">
    <property type="entry name" value="Frizzled class receptor 2"/>
    <property type="match status" value="1"/>
</dbReference>
<dbReference type="FunFam" id="1.20.1070.10:FF:000029">
    <property type="entry name" value="Frizzled class receptor 2"/>
    <property type="match status" value="1"/>
</dbReference>
<dbReference type="Gene3D" id="1.10.2000.10">
    <property type="entry name" value="Frizzled cysteine-rich domain"/>
    <property type="match status" value="1"/>
</dbReference>
<dbReference type="Gene3D" id="1.20.1070.10">
    <property type="entry name" value="Rhodopsin 7-helix transmembrane proteins"/>
    <property type="match status" value="1"/>
</dbReference>
<dbReference type="InterPro" id="IPR015526">
    <property type="entry name" value="Frizzled/SFRP"/>
</dbReference>
<dbReference type="InterPro" id="IPR000539">
    <property type="entry name" value="Frizzled/Smoothened_7TM"/>
</dbReference>
<dbReference type="InterPro" id="IPR020067">
    <property type="entry name" value="Frizzled_dom"/>
</dbReference>
<dbReference type="InterPro" id="IPR036790">
    <property type="entry name" value="Frizzled_dom_sf"/>
</dbReference>
<dbReference type="InterPro" id="IPR017981">
    <property type="entry name" value="GPCR_2-like_7TM"/>
</dbReference>
<dbReference type="PANTHER" id="PTHR11309">
    <property type="entry name" value="FRIZZLED"/>
    <property type="match status" value="1"/>
</dbReference>
<dbReference type="PANTHER" id="PTHR11309:SF81">
    <property type="entry name" value="FRIZZLED-1"/>
    <property type="match status" value="1"/>
</dbReference>
<dbReference type="Pfam" id="PF01534">
    <property type="entry name" value="Frizzled"/>
    <property type="match status" value="1"/>
</dbReference>
<dbReference type="Pfam" id="PF01392">
    <property type="entry name" value="Fz"/>
    <property type="match status" value="1"/>
</dbReference>
<dbReference type="PRINTS" id="PR00489">
    <property type="entry name" value="FRIZZLED"/>
</dbReference>
<dbReference type="SMART" id="SM00063">
    <property type="entry name" value="FRI"/>
    <property type="match status" value="1"/>
</dbReference>
<dbReference type="SMART" id="SM01330">
    <property type="entry name" value="Frizzled"/>
    <property type="match status" value="1"/>
</dbReference>
<dbReference type="SUPFAM" id="SSF63501">
    <property type="entry name" value="Frizzled cysteine-rich domain"/>
    <property type="match status" value="1"/>
</dbReference>
<dbReference type="PROSITE" id="PS50038">
    <property type="entry name" value="FZ"/>
    <property type="match status" value="1"/>
</dbReference>
<dbReference type="PROSITE" id="PS50261">
    <property type="entry name" value="G_PROTEIN_RECEP_F2_4"/>
    <property type="match status" value="1"/>
</dbReference>
<reference key="1">
    <citation type="journal article" date="2000" name="Dev. Growth Differ.">
        <title>The maternal Xenopus beta-catenin signaling pathway, activated by frizzled homologs, induces goosecoid in a cell non-autonomous manner.</title>
        <authorList>
            <person name="Brown J.D."/>
            <person name="Hallagan S.E."/>
            <person name="McGrew L.L."/>
            <person name="Miller J.R."/>
            <person name="Moon R.T."/>
        </authorList>
    </citation>
    <scope>NUCLEOTIDE SEQUENCE [MRNA]</scope>
    <scope>FUNCTION</scope>
    <scope>COUPLING TO BETA-CATENIN PATHWAY</scope>
    <scope>SUBCELLULAR LOCATION</scope>
    <scope>INTERACTION WITH WNT8</scope>
    <scope>TISSUE SPECIFICITY</scope>
    <scope>DEVELOPMENTAL STAGE</scope>
</reference>
<organism>
    <name type="scientific">Xenopus laevis</name>
    <name type="common">African clawed frog</name>
    <dbReference type="NCBI Taxonomy" id="8355"/>
    <lineage>
        <taxon>Eukaryota</taxon>
        <taxon>Metazoa</taxon>
        <taxon>Chordata</taxon>
        <taxon>Craniata</taxon>
        <taxon>Vertebrata</taxon>
        <taxon>Euteleostomi</taxon>
        <taxon>Amphibia</taxon>
        <taxon>Batrachia</taxon>
        <taxon>Anura</taxon>
        <taxon>Pipoidea</taxon>
        <taxon>Pipidae</taxon>
        <taxon>Xenopodinae</taxon>
        <taxon>Xenopus</taxon>
        <taxon>Xenopus</taxon>
    </lineage>
</organism>